<sequence length="113" mass="12263">MHELGITQNIVAIVNEYAHGAKVRRVLLEIGKLSAIMPDAIKFCFDICSQGTVLEGAVLEILEIPGLAKCRQCGAEIALEKPFGICNCGSVHLDLITGEELKIKEIEVEEVCV</sequence>
<protein>
    <recommendedName>
        <fullName evidence="1">Hydrogenase maturation factor HypA</fullName>
    </recommendedName>
</protein>
<organism>
    <name type="scientific">Trichormus variabilis (strain ATCC 29413 / PCC 7937)</name>
    <name type="common">Anabaena variabilis</name>
    <dbReference type="NCBI Taxonomy" id="240292"/>
    <lineage>
        <taxon>Bacteria</taxon>
        <taxon>Bacillati</taxon>
        <taxon>Cyanobacteriota</taxon>
        <taxon>Cyanophyceae</taxon>
        <taxon>Nostocales</taxon>
        <taxon>Nostocaceae</taxon>
        <taxon>Trichormus</taxon>
    </lineage>
</organism>
<gene>
    <name evidence="1" type="primary">hypA</name>
    <name type="ordered locus">Ava_4607</name>
</gene>
<dbReference type="EMBL" id="CP000117">
    <property type="protein sequence ID" value="ABA24204.1"/>
    <property type="molecule type" value="Genomic_DNA"/>
</dbReference>
<dbReference type="SMR" id="Q3M482"/>
<dbReference type="STRING" id="240292.Ava_4607"/>
<dbReference type="KEGG" id="ava:Ava_4607"/>
<dbReference type="eggNOG" id="COG0375">
    <property type="taxonomic scope" value="Bacteria"/>
</dbReference>
<dbReference type="HOGENOM" id="CLU_126929_3_0_3"/>
<dbReference type="Proteomes" id="UP000002533">
    <property type="component" value="Chromosome"/>
</dbReference>
<dbReference type="GO" id="GO:0016151">
    <property type="term" value="F:nickel cation binding"/>
    <property type="evidence" value="ECO:0007669"/>
    <property type="project" value="UniProtKB-UniRule"/>
</dbReference>
<dbReference type="GO" id="GO:0008270">
    <property type="term" value="F:zinc ion binding"/>
    <property type="evidence" value="ECO:0007669"/>
    <property type="project" value="UniProtKB-UniRule"/>
</dbReference>
<dbReference type="GO" id="GO:0051604">
    <property type="term" value="P:protein maturation"/>
    <property type="evidence" value="ECO:0007669"/>
    <property type="project" value="InterPro"/>
</dbReference>
<dbReference type="GO" id="GO:0036211">
    <property type="term" value="P:protein modification process"/>
    <property type="evidence" value="ECO:0007669"/>
    <property type="project" value="UniProtKB-UniRule"/>
</dbReference>
<dbReference type="Gene3D" id="3.30.2320.80">
    <property type="match status" value="1"/>
</dbReference>
<dbReference type="HAMAP" id="MF_00213">
    <property type="entry name" value="HypA_HybF"/>
    <property type="match status" value="1"/>
</dbReference>
<dbReference type="InterPro" id="IPR020538">
    <property type="entry name" value="Hydgase_Ni_incorp_HypA/HybF_CS"/>
</dbReference>
<dbReference type="InterPro" id="IPR000688">
    <property type="entry name" value="HypA/HybF"/>
</dbReference>
<dbReference type="NCBIfam" id="TIGR00100">
    <property type="entry name" value="hypA"/>
    <property type="match status" value="1"/>
</dbReference>
<dbReference type="PANTHER" id="PTHR34535">
    <property type="entry name" value="HYDROGENASE MATURATION FACTOR HYPA"/>
    <property type="match status" value="1"/>
</dbReference>
<dbReference type="PANTHER" id="PTHR34535:SF3">
    <property type="entry name" value="HYDROGENASE MATURATION FACTOR HYPA"/>
    <property type="match status" value="1"/>
</dbReference>
<dbReference type="Pfam" id="PF01155">
    <property type="entry name" value="HypA"/>
    <property type="match status" value="1"/>
</dbReference>
<dbReference type="PIRSF" id="PIRSF004761">
    <property type="entry name" value="Hydrgn_mat_HypA"/>
    <property type="match status" value="1"/>
</dbReference>
<dbReference type="PROSITE" id="PS01249">
    <property type="entry name" value="HYPA"/>
    <property type="match status" value="1"/>
</dbReference>
<comment type="function">
    <text evidence="1">Involved in the maturation of [NiFe] hydrogenases. Required for nickel insertion into the metal center of the hydrogenase.</text>
</comment>
<comment type="similarity">
    <text evidence="1">Belongs to the HypA/HybF family.</text>
</comment>
<reference key="1">
    <citation type="journal article" date="2014" name="Stand. Genomic Sci.">
        <title>Complete genome sequence of Anabaena variabilis ATCC 29413.</title>
        <authorList>
            <person name="Thiel T."/>
            <person name="Pratte B.S."/>
            <person name="Zhong J."/>
            <person name="Goodwin L."/>
            <person name="Copeland A."/>
            <person name="Lucas S."/>
            <person name="Han C."/>
            <person name="Pitluck S."/>
            <person name="Land M.L."/>
            <person name="Kyrpides N.C."/>
            <person name="Woyke T."/>
        </authorList>
    </citation>
    <scope>NUCLEOTIDE SEQUENCE [LARGE SCALE GENOMIC DNA]</scope>
    <source>
        <strain>ATCC 29413 / PCC 7937</strain>
    </source>
</reference>
<keyword id="KW-0479">Metal-binding</keyword>
<keyword id="KW-0533">Nickel</keyword>
<keyword id="KW-0862">Zinc</keyword>
<evidence type="ECO:0000255" key="1">
    <source>
        <dbReference type="HAMAP-Rule" id="MF_00213"/>
    </source>
</evidence>
<accession>Q3M482</accession>
<proteinExistence type="inferred from homology"/>
<name>HYPA_TRIV2</name>
<feature type="chain" id="PRO_1000023821" description="Hydrogenase maturation factor HypA">
    <location>
        <begin position="1"/>
        <end position="113"/>
    </location>
</feature>
<feature type="binding site" evidence="1">
    <location>
        <position position="2"/>
    </location>
    <ligand>
        <name>Ni(2+)</name>
        <dbReference type="ChEBI" id="CHEBI:49786"/>
    </ligand>
</feature>
<feature type="binding site" evidence="1">
    <location>
        <position position="70"/>
    </location>
    <ligand>
        <name>Zn(2+)</name>
        <dbReference type="ChEBI" id="CHEBI:29105"/>
    </ligand>
</feature>
<feature type="binding site" evidence="1">
    <location>
        <position position="73"/>
    </location>
    <ligand>
        <name>Zn(2+)</name>
        <dbReference type="ChEBI" id="CHEBI:29105"/>
    </ligand>
</feature>
<feature type="binding site" evidence="1">
    <location>
        <position position="86"/>
    </location>
    <ligand>
        <name>Zn(2+)</name>
        <dbReference type="ChEBI" id="CHEBI:29105"/>
    </ligand>
</feature>
<feature type="binding site" evidence="1">
    <location>
        <position position="88"/>
    </location>
    <ligand>
        <name>Zn(2+)</name>
        <dbReference type="ChEBI" id="CHEBI:29105"/>
    </ligand>
</feature>